<dbReference type="EMBL" id="BC151662">
    <property type="protein sequence ID" value="AAI51663.1"/>
    <property type="molecule type" value="mRNA"/>
</dbReference>
<dbReference type="RefSeq" id="NP_001095511.1">
    <property type="nucleotide sequence ID" value="NM_001102041.2"/>
</dbReference>
<dbReference type="RefSeq" id="XP_010809010.1">
    <property type="nucleotide sequence ID" value="XM_010810708.2"/>
</dbReference>
<dbReference type="RefSeq" id="XP_010809011.1">
    <property type="nucleotide sequence ID" value="XM_010810709.2"/>
</dbReference>
<dbReference type="RefSeq" id="XP_010809012.1">
    <property type="nucleotide sequence ID" value="XM_010810710.2"/>
</dbReference>
<dbReference type="RefSeq" id="XP_059748019.1">
    <property type="nucleotide sequence ID" value="XM_059892036.1"/>
</dbReference>
<dbReference type="RefSeq" id="XP_059748020.1">
    <property type="nucleotide sequence ID" value="XM_059892037.1"/>
</dbReference>
<dbReference type="RefSeq" id="XP_059748021.1">
    <property type="nucleotide sequence ID" value="XM_059892038.1"/>
</dbReference>
<dbReference type="RefSeq" id="XP_059748022.1">
    <property type="nucleotide sequence ID" value="XM_059892039.1"/>
</dbReference>
<dbReference type="SMR" id="A7E316"/>
<dbReference type="FunCoup" id="A7E316">
    <property type="interactions" value="54"/>
</dbReference>
<dbReference type="STRING" id="9913.ENSBTAP00000068044"/>
<dbReference type="PaxDb" id="9913-ENSBTAP00000017794"/>
<dbReference type="Ensembl" id="ENSBTAT00000017794.5">
    <property type="protein sequence ID" value="ENSBTAP00000017794.4"/>
    <property type="gene ID" value="ENSBTAG00000013371.7"/>
</dbReference>
<dbReference type="GeneID" id="517231"/>
<dbReference type="KEGG" id="bta:517231"/>
<dbReference type="CTD" id="80183"/>
<dbReference type="VEuPathDB" id="HostDB:ENSBTAG00000013371"/>
<dbReference type="VGNC" id="VGNC:34213">
    <property type="gene designation" value="RUBCNL"/>
</dbReference>
<dbReference type="eggNOG" id="KOG1829">
    <property type="taxonomic scope" value="Eukaryota"/>
</dbReference>
<dbReference type="GeneTree" id="ENSGT00940000160585"/>
<dbReference type="HOGENOM" id="CLU_027575_0_0_1"/>
<dbReference type="InParanoid" id="A7E316"/>
<dbReference type="OrthoDB" id="10067503at2759"/>
<dbReference type="TreeFam" id="TF317067"/>
<dbReference type="Proteomes" id="UP000009136">
    <property type="component" value="Chromosome 12"/>
</dbReference>
<dbReference type="Bgee" id="ENSBTAG00000013371">
    <property type="expression patterns" value="Expressed in neutrophil and 103 other cell types or tissues"/>
</dbReference>
<dbReference type="GO" id="GO:0000421">
    <property type="term" value="C:autophagosome membrane"/>
    <property type="evidence" value="ECO:0000250"/>
    <property type="project" value="UniProtKB"/>
</dbReference>
<dbReference type="GO" id="GO:0031410">
    <property type="term" value="C:cytoplasmic vesicle"/>
    <property type="evidence" value="ECO:0007669"/>
    <property type="project" value="UniProtKB-KW"/>
</dbReference>
<dbReference type="GO" id="GO:0043231">
    <property type="term" value="C:intracellular membrane-bounded organelle"/>
    <property type="evidence" value="ECO:0000318"/>
    <property type="project" value="GO_Central"/>
</dbReference>
<dbReference type="GO" id="GO:1901981">
    <property type="term" value="F:phosphatidylinositol phosphate binding"/>
    <property type="evidence" value="ECO:0000318"/>
    <property type="project" value="GO_Central"/>
</dbReference>
<dbReference type="GO" id="GO:0032266">
    <property type="term" value="F:phosphatidylinositol-3-phosphate binding"/>
    <property type="evidence" value="ECO:0000250"/>
    <property type="project" value="UniProtKB"/>
</dbReference>
<dbReference type="GO" id="GO:0070273">
    <property type="term" value="F:phosphatidylinositol-4-phosphate binding"/>
    <property type="evidence" value="ECO:0000250"/>
    <property type="project" value="UniProtKB"/>
</dbReference>
<dbReference type="GO" id="GO:0010314">
    <property type="term" value="F:phosphatidylinositol-5-phosphate binding"/>
    <property type="evidence" value="ECO:0000250"/>
    <property type="project" value="UniProtKB"/>
</dbReference>
<dbReference type="GO" id="GO:0097352">
    <property type="term" value="P:autophagosome maturation"/>
    <property type="evidence" value="ECO:0000250"/>
    <property type="project" value="UniProtKB"/>
</dbReference>
<dbReference type="GO" id="GO:0061910">
    <property type="term" value="P:autophagosome-endosome fusion"/>
    <property type="evidence" value="ECO:0000318"/>
    <property type="project" value="GO_Central"/>
</dbReference>
<dbReference type="GO" id="GO:0061909">
    <property type="term" value="P:autophagosome-lysosome fusion"/>
    <property type="evidence" value="ECO:0000250"/>
    <property type="project" value="UniProtKB"/>
</dbReference>
<dbReference type="GO" id="GO:0006629">
    <property type="term" value="P:lipid metabolic process"/>
    <property type="evidence" value="ECO:0007669"/>
    <property type="project" value="UniProtKB-KW"/>
</dbReference>
<dbReference type="GO" id="GO:0070873">
    <property type="term" value="P:regulation of glycogen metabolic process"/>
    <property type="evidence" value="ECO:0000250"/>
    <property type="project" value="UniProtKB"/>
</dbReference>
<dbReference type="GO" id="GO:0019216">
    <property type="term" value="P:regulation of lipid metabolic process"/>
    <property type="evidence" value="ECO:0000250"/>
    <property type="project" value="UniProtKB"/>
</dbReference>
<dbReference type="InterPro" id="IPR052428">
    <property type="entry name" value="Autophagy_HostDef_Reg"/>
</dbReference>
<dbReference type="InterPro" id="IPR025258">
    <property type="entry name" value="RH_dom"/>
</dbReference>
<dbReference type="InterPro" id="IPR048569">
    <property type="entry name" value="RUBC_PIKBD"/>
</dbReference>
<dbReference type="PANTHER" id="PTHR45971">
    <property type="entry name" value="PHOX (PX) DOMAIN-CONTAINING PROTEIN"/>
    <property type="match status" value="1"/>
</dbReference>
<dbReference type="PANTHER" id="PTHR45971:SF2">
    <property type="entry name" value="PROTEIN ASSOCIATED WITH UVRAG AS AUTOPHAGY ENHANCER"/>
    <property type="match status" value="1"/>
</dbReference>
<dbReference type="Pfam" id="PF13901">
    <property type="entry name" value="RH_dom"/>
    <property type="match status" value="1"/>
</dbReference>
<dbReference type="Pfam" id="PF21054">
    <property type="entry name" value="RUBC_PIKBD"/>
    <property type="match status" value="1"/>
</dbReference>
<dbReference type="SMART" id="SM01175">
    <property type="entry name" value="DUF4206"/>
    <property type="match status" value="1"/>
</dbReference>
<gene>
    <name evidence="2" type="primary">RUBCNL</name>
</gene>
<organism>
    <name type="scientific">Bos taurus</name>
    <name type="common">Bovine</name>
    <dbReference type="NCBI Taxonomy" id="9913"/>
    <lineage>
        <taxon>Eukaryota</taxon>
        <taxon>Metazoa</taxon>
        <taxon>Chordata</taxon>
        <taxon>Craniata</taxon>
        <taxon>Vertebrata</taxon>
        <taxon>Euteleostomi</taxon>
        <taxon>Mammalia</taxon>
        <taxon>Eutheria</taxon>
        <taxon>Laurasiatheria</taxon>
        <taxon>Artiodactyla</taxon>
        <taxon>Ruminantia</taxon>
        <taxon>Pecora</taxon>
        <taxon>Bovidae</taxon>
        <taxon>Bovinae</taxon>
        <taxon>Bos</taxon>
    </lineage>
</organism>
<accession>A7E316</accession>
<name>PACER_BOVIN</name>
<proteinExistence type="evidence at transcript level"/>
<sequence>MVSQSSGRQDSPVDPWEGVSDDPGNTDGLPSLLDTEHPFCPSDIRFTRHRAAWINPPCAQQQLQDASPQVLAVGNRESHTASNTKSPLGTSPLSLGDSVVETSLPKGTTDSLGSSSAWGTAGNGSDSSVTLKEERAGLPRRCPHTSLITSSKTVSGPPCPEDGRAFFKPSQLTASADADAVQVGGRTVSSNSFSPEAFVLPVDAEKENAHFYVADMIISVMEKMKCNILSQQHTETWSTEEAGRSLGNSRADLEGTFYTHVKQESGSSTSSDSGYEGCVLQVSPVVETPTFSEVTEEDCKCDFDDFVIVELGDFSNTTEPCGCSSDTSKSVIHEPNFNSAELIAKELYRVFRKCWMLAEVHYQLTGSLDAAGSIVINEERVQKDFESSTDVVQEIKLKSRIRGTGDWAPPRFQIIFDIHPPLKRDLVVIAQNFFCAGCGTPIEPKFVKRLRYCEYLGKYFCDCCHSYSESCIPARILRMWDFRKYYVSNFSKRLLDHIWHEPIFNLLHVSHGLYTKAKELDRVREIQEQLFHIKKLLKTCRFAESTLKEFEQLPGHLTEALHLFSLEDMVKVKKGLLAPLLKDILKASLEHVASCELCQGKGFICEFCRSTAVIFPFQTATCRRCSACRACFHKQCFQSSKCPRCARITARRRLLESLPSAAT</sequence>
<keyword id="KW-0007">Acetylation</keyword>
<keyword id="KW-0072">Autophagy</keyword>
<keyword id="KW-0968">Cytoplasmic vesicle</keyword>
<keyword id="KW-0443">Lipid metabolism</keyword>
<keyword id="KW-0446">Lipid-binding</keyword>
<keyword id="KW-0472">Membrane</keyword>
<keyword id="KW-1185">Reference proteome</keyword>
<evidence type="ECO:0000250" key="1">
    <source>
        <dbReference type="UniProtKB" id="Q3TD16"/>
    </source>
</evidence>
<evidence type="ECO:0000250" key="2">
    <source>
        <dbReference type="UniProtKB" id="Q9H714"/>
    </source>
</evidence>
<evidence type="ECO:0000256" key="3">
    <source>
        <dbReference type="SAM" id="MobiDB-lite"/>
    </source>
</evidence>
<evidence type="ECO:0000305" key="4"/>
<reference key="1">
    <citation type="submission" date="2007-08" db="EMBL/GenBank/DDBJ databases">
        <authorList>
            <consortium name="NIH - Mammalian Gene Collection (MGC) project"/>
        </authorList>
    </citation>
    <scope>NUCLEOTIDE SEQUENCE [LARGE SCALE MRNA]</scope>
    <source>
        <strain>Hereford</strain>
        <tissue>Thymus</tissue>
    </source>
</reference>
<protein>
    <recommendedName>
        <fullName evidence="2">Protein associated with UVRAG as autophagy enhancer</fullName>
        <shortName evidence="2">Pacer</shortName>
    </recommendedName>
    <alternativeName>
        <fullName evidence="4">Protein Rubicon-like</fullName>
    </alternativeName>
</protein>
<comment type="function">
    <text evidence="1 2">Regulator of autophagy that promotes autophagosome maturation by facilitating the biogenesis of phosphatidylinositol 3-phosphate (PtdIns(3)P) in late steps of autophagy. Acts by antagonizing RUBCN, thereby stimulating phosphatidylinositol 3-kinase activity of the PI3K/PI3KC3 complex. Following anchorage to the autophagosomal SNARE STX17, promotes the recruitment of PI3K/PI3KC3 and HOPS complexes to the autophagosome to regulate the fusion specificity of autophagosomes with late endosomes/lysosomes. Binds phosphoinositides phosphatidylinositol 3-phosphate (PtdIns(3)P), 4-phosphate (PtdIns(4)P) and 5-phosphate (PtdIns(5)P) (By similarity). In addition to its role in autophagy, acts as a regulator of lipid and glycogen homeostasis (By similarity). May act as a tumor suppressor (By similarity).</text>
</comment>
<comment type="subunit">
    <text evidence="2">Interacts with UVRAG; the interaction is direct and promotes association with the PI3K/PI3KC3 and HOPS complexes. Interacts with STX17.</text>
</comment>
<comment type="subcellular location">
    <subcellularLocation>
        <location evidence="2">Cytoplasmic vesicle</location>
        <location evidence="2">Autophagosome membrane</location>
        <topology evidence="2">Peripheral membrane protein</topology>
    </subcellularLocation>
    <text evidence="2">Associates with late autophagic structure. Recruitment to autophagosome membrane is promoted by autophagic stimuli.</text>
</comment>
<comment type="PTM">
    <text evidence="2">Acetylated by KAT5/TIP60 under autophagy induction, promoting autophagosome maturation and lipid metabolism. Lys-484 and Lys-574 constitute the key sites for tuning function in autophagy.</text>
</comment>
<feature type="chain" id="PRO_0000350566" description="Protein associated with UVRAG as autophagy enhancer">
    <location>
        <begin position="1"/>
        <end position="663"/>
    </location>
</feature>
<feature type="region of interest" description="Disordered" evidence="3">
    <location>
        <begin position="1"/>
        <end position="36"/>
    </location>
</feature>
<feature type="region of interest" description="Disordered" evidence="3">
    <location>
        <begin position="65"/>
        <end position="136"/>
    </location>
</feature>
<feature type="region of interest" description="Interaction with UVRAG" evidence="2">
    <location>
        <begin position="196"/>
        <end position="235"/>
    </location>
</feature>
<feature type="compositionally biased region" description="Polar residues" evidence="3">
    <location>
        <begin position="80"/>
        <end position="93"/>
    </location>
</feature>
<feature type="compositionally biased region" description="Polar residues" evidence="3">
    <location>
        <begin position="105"/>
        <end position="130"/>
    </location>
</feature>
<feature type="modified residue" description="N6-acetyllysine" evidence="2">
    <location>
        <position position="484"/>
    </location>
</feature>
<feature type="modified residue" description="N6-acetyllysine" evidence="2">
    <location>
        <position position="534"/>
    </location>
</feature>
<feature type="modified residue" description="N6-acetyllysine" evidence="2">
    <location>
        <position position="574"/>
    </location>
</feature>
<feature type="modified residue" description="N6-acetyllysine" evidence="2">
    <location>
        <position position="634"/>
    </location>
</feature>